<organism>
    <name type="scientific">Saccharomyces cerevisiae (strain RM11-1a)</name>
    <name type="common">Baker's yeast</name>
    <dbReference type="NCBI Taxonomy" id="285006"/>
    <lineage>
        <taxon>Eukaryota</taxon>
        <taxon>Fungi</taxon>
        <taxon>Dikarya</taxon>
        <taxon>Ascomycota</taxon>
        <taxon>Saccharomycotina</taxon>
        <taxon>Saccharomycetes</taxon>
        <taxon>Saccharomycetales</taxon>
        <taxon>Saccharomycetaceae</taxon>
        <taxon>Saccharomyces</taxon>
    </lineage>
</organism>
<reference key="1">
    <citation type="submission" date="2005-03" db="EMBL/GenBank/DDBJ databases">
        <title>Annotation of the Saccharomyces cerevisiae RM11-1a genome.</title>
        <authorList>
            <consortium name="The Broad Institute Genome Sequencing Platform"/>
            <person name="Birren B.W."/>
            <person name="Lander E.S."/>
            <person name="Galagan J.E."/>
            <person name="Nusbaum C."/>
            <person name="Devon K."/>
            <person name="Cuomo C."/>
            <person name="Jaffe D.B."/>
            <person name="Butler J."/>
            <person name="Alvarez P."/>
            <person name="Gnerre S."/>
            <person name="Grabherr M."/>
            <person name="Kleber M."/>
            <person name="Mauceli E.W."/>
            <person name="Brockman W."/>
            <person name="MacCallum I.A."/>
            <person name="Rounsley S."/>
            <person name="Young S.K."/>
            <person name="LaButti K."/>
            <person name="Pushparaj V."/>
            <person name="DeCaprio D."/>
            <person name="Crawford M."/>
            <person name="Koehrsen M."/>
            <person name="Engels R."/>
            <person name="Montgomery P."/>
            <person name="Pearson M."/>
            <person name="Howarth C."/>
            <person name="Larson L."/>
            <person name="Luoma S."/>
            <person name="White J."/>
            <person name="O'Leary S."/>
            <person name="Kodira C.D."/>
            <person name="Zeng Q."/>
            <person name="Yandava C."/>
            <person name="Alvarado L."/>
            <person name="Pratt S."/>
            <person name="Kruglyak L."/>
        </authorList>
    </citation>
    <scope>NUCLEOTIDE SEQUENCE [LARGE SCALE GENOMIC DNA]</scope>
    <source>
        <strain>RM11-1a</strain>
    </source>
</reference>
<comment type="function">
    <text evidence="1">Component of the spindle pole body (SPB) required for the proper execution of spindle pole body (SPB) duplication. Links the central plaque component SPC42 to the inner plaque component SPC110 (By similarity).</text>
</comment>
<comment type="subunit">
    <text evidence="1">Component of the SPC110 complex containing at least CMD1, SPC29, SPC42 and SCP110. Interacts with BBP1.</text>
</comment>
<comment type="subcellular location">
    <subcellularLocation>
        <location evidence="1">Nucleus</location>
    </subcellularLocation>
    <subcellularLocation>
        <location evidence="1">Cytoplasm</location>
        <location evidence="1">Cytoskeleton</location>
        <location evidence="1">Microtubule organizing center</location>
        <location evidence="1">Spindle pole body</location>
    </subcellularLocation>
</comment>
<comment type="PTM">
    <text evidence="1">MPS1-mediated phosphorylation at Thr-240 is required for spindle pole body duplication.</text>
</comment>
<comment type="similarity">
    <text evidence="4">Belongs to the SPC29 family.</text>
</comment>
<accession>B3LKV0</accession>
<dbReference type="EMBL" id="CH408046">
    <property type="protein sequence ID" value="EDV11098.1"/>
    <property type="molecule type" value="Genomic_DNA"/>
</dbReference>
<dbReference type="SMR" id="B3LKV0"/>
<dbReference type="HOGENOM" id="CLU_1099229_0_0_1"/>
<dbReference type="OrthoDB" id="15422at4893"/>
<dbReference type="Proteomes" id="UP000008335">
    <property type="component" value="Unassembled WGS sequence"/>
</dbReference>
<dbReference type="GO" id="GO:0005823">
    <property type="term" value="C:central plaque of spindle pole body"/>
    <property type="evidence" value="ECO:0007669"/>
    <property type="project" value="InterPro"/>
</dbReference>
<dbReference type="GO" id="GO:0005737">
    <property type="term" value="C:cytoplasm"/>
    <property type="evidence" value="ECO:0007669"/>
    <property type="project" value="UniProtKB-KW"/>
</dbReference>
<dbReference type="GO" id="GO:0005634">
    <property type="term" value="C:nucleus"/>
    <property type="evidence" value="ECO:0007669"/>
    <property type="project" value="UniProtKB-SubCell"/>
</dbReference>
<dbReference type="GO" id="GO:0005200">
    <property type="term" value="F:structural constituent of cytoskeleton"/>
    <property type="evidence" value="ECO:0007669"/>
    <property type="project" value="InterPro"/>
</dbReference>
<dbReference type="GO" id="GO:0030474">
    <property type="term" value="P:spindle pole body duplication"/>
    <property type="evidence" value="ECO:0007669"/>
    <property type="project" value="InterPro"/>
</dbReference>
<dbReference type="InterPro" id="IPR031392">
    <property type="entry name" value="Spc29"/>
</dbReference>
<dbReference type="Pfam" id="PF17082">
    <property type="entry name" value="Spc29"/>
    <property type="match status" value="1"/>
</dbReference>
<keyword id="KW-0963">Cytoplasm</keyword>
<keyword id="KW-0206">Cytoskeleton</keyword>
<keyword id="KW-0539">Nucleus</keyword>
<keyword id="KW-0597">Phosphoprotein</keyword>
<proteinExistence type="inferred from homology"/>
<feature type="chain" id="PRO_0000409188" description="Spindle pole component 29">
    <location>
        <begin position="1"/>
        <end position="253"/>
    </location>
</feature>
<feature type="region of interest" description="Disordered" evidence="3">
    <location>
        <begin position="1"/>
        <end position="20"/>
    </location>
</feature>
<feature type="region of interest" description="Disordered" evidence="3">
    <location>
        <begin position="31"/>
        <end position="123"/>
    </location>
</feature>
<feature type="region of interest" description="Disordered" evidence="3">
    <location>
        <begin position="210"/>
        <end position="231"/>
    </location>
</feature>
<feature type="compositionally biased region" description="Polar residues" evidence="3">
    <location>
        <begin position="1"/>
        <end position="12"/>
    </location>
</feature>
<feature type="compositionally biased region" description="Basic and acidic residues" evidence="3">
    <location>
        <begin position="69"/>
        <end position="91"/>
    </location>
</feature>
<feature type="compositionally biased region" description="Basic and acidic residues" evidence="3">
    <location>
        <begin position="211"/>
        <end position="231"/>
    </location>
</feature>
<feature type="modified residue" description="Phosphothreonine" evidence="2">
    <location>
        <position position="18"/>
    </location>
</feature>
<feature type="modified residue" description="Phosphoserine" evidence="2">
    <location>
        <position position="65"/>
    </location>
</feature>
<feature type="modified residue" description="Phosphothreonine; by MPS1" evidence="2">
    <location>
        <position position="240"/>
    </location>
</feature>
<protein>
    <recommendedName>
        <fullName>Spindle pole component 29</fullName>
    </recommendedName>
</protein>
<evidence type="ECO:0000250" key="1"/>
<evidence type="ECO:0000250" key="2">
    <source>
        <dbReference type="UniProtKB" id="P33419"/>
    </source>
</evidence>
<evidence type="ECO:0000256" key="3">
    <source>
        <dbReference type="SAM" id="MobiDB-lite"/>
    </source>
</evidence>
<evidence type="ECO:0000305" key="4"/>
<gene>
    <name type="primary">SPC29</name>
    <name type="synonym">LPH3</name>
    <name type="synonym">NIP29</name>
    <name type="ORF">SCRG_02371</name>
</gene>
<name>SPC29_YEAS1</name>
<sequence length="253" mass="29280">MDYSNFGNSASKKFQDDTLNRVRKEHEEALKKLREENFSSNTSELGNKKHYRAQERMSSPLHRLSPTGKSDDRKVKSPLDDKLRRQLREGNTRLPPPPFSSYGMPPTNRSNLDRIRRRTSSPVRTDKFASQNVIDDQRLEIKYLERIVYDQGTVIDNLTSRITRLESFILNSISDRGDKNFASLEHSRSFSGFPTNKTYGLQMGGLYENDMPYRRSSDNINKEGAREDRSSQIHIENESTEDILKILSSSFHN</sequence>